<organism>
    <name type="scientific">Saccharomyces cerevisiae (strain ATCC 204508 / S288c)</name>
    <name type="common">Baker's yeast</name>
    <dbReference type="NCBI Taxonomy" id="559292"/>
    <lineage>
        <taxon>Eukaryota</taxon>
        <taxon>Fungi</taxon>
        <taxon>Dikarya</taxon>
        <taxon>Ascomycota</taxon>
        <taxon>Saccharomycotina</taxon>
        <taxon>Saccharomycetes</taxon>
        <taxon>Saccharomycetales</taxon>
        <taxon>Saccharomycetaceae</taxon>
        <taxon>Saccharomyces</taxon>
    </lineage>
</organism>
<protein>
    <recommendedName>
        <fullName>Plasma membrane fusion protein PRM1</fullName>
    </recommendedName>
    <alternativeName>
        <fullName>Pheromone-regulated membrane protein 1</fullName>
    </alternativeName>
</protein>
<name>PRM1_YEAST</name>
<feature type="chain" id="PRO_0000203377" description="Plasma membrane fusion protein PRM1">
    <location>
        <begin position="1"/>
        <end position="661"/>
    </location>
</feature>
<feature type="topological domain" description="Extracellular" evidence="1">
    <location>
        <begin position="1"/>
        <end position="16"/>
    </location>
</feature>
<feature type="transmembrane region" description="Helical" evidence="1">
    <location>
        <begin position="17"/>
        <end position="37"/>
    </location>
</feature>
<feature type="topological domain" description="Cytoplasmic" evidence="1">
    <location>
        <begin position="38"/>
        <end position="105"/>
    </location>
</feature>
<feature type="transmembrane region" description="Helical" evidence="1">
    <location>
        <begin position="106"/>
        <end position="126"/>
    </location>
</feature>
<feature type="topological domain" description="Extracellular" evidence="1">
    <location>
        <begin position="127"/>
        <end position="296"/>
    </location>
</feature>
<feature type="transmembrane region" description="Helical" evidence="1">
    <location>
        <begin position="297"/>
        <end position="317"/>
    </location>
</feature>
<feature type="topological domain" description="Cytoplasmic" evidence="1">
    <location>
        <begin position="318"/>
        <end position="424"/>
    </location>
</feature>
<feature type="transmembrane region" description="Helical" evidence="1">
    <location>
        <begin position="425"/>
        <end position="445"/>
    </location>
</feature>
<feature type="topological domain" description="Extracellular" evidence="1">
    <location>
        <begin position="446"/>
        <end position="629"/>
    </location>
</feature>
<feature type="transmembrane region" description="Helical" evidence="1">
    <location>
        <begin position="630"/>
        <end position="650"/>
    </location>
</feature>
<feature type="topological domain" description="Cytoplasmic" evidence="1">
    <location>
        <begin position="651"/>
        <end position="661"/>
    </location>
</feature>
<feature type="glycosylation site" description="N-linked (GlcNAc...) asparagine" evidence="1">
    <location>
        <position position="135"/>
    </location>
</feature>
<feature type="glycosylation site" description="N-linked (GlcNAc...) asparagine" evidence="1">
    <location>
        <position position="145"/>
    </location>
</feature>
<feature type="glycosylation site" description="N-linked (GlcNAc...) asparagine" evidence="1">
    <location>
        <position position="188"/>
    </location>
</feature>
<feature type="glycosylation site" description="N-linked (GlcNAc...) asparagine" evidence="1">
    <location>
        <position position="197"/>
    </location>
</feature>
<feature type="glycosylation site" description="N-linked (GlcNAc...) asparagine" evidence="1">
    <location>
        <position position="231"/>
    </location>
</feature>
<feature type="glycosylation site" description="N-linked (GlcNAc...) asparagine" evidence="1">
    <location>
        <position position="252"/>
    </location>
</feature>
<feature type="glycosylation site" description="N-linked (GlcNAc...) asparagine" evidence="1">
    <location>
        <position position="272"/>
    </location>
</feature>
<feature type="glycosylation site" description="N-linked (GlcNAc...) asparagine" evidence="1">
    <location>
        <position position="280"/>
    </location>
</feature>
<feature type="glycosylation site" description="N-linked (GlcNAc...) asparagine" evidence="1">
    <location>
        <position position="490"/>
    </location>
</feature>
<feature type="glycosylation site" description="N-linked (GlcNAc...) asparagine" evidence="1">
    <location>
        <position position="505"/>
    </location>
</feature>
<feature type="glycosylation site" description="N-linked (GlcNAc...) asparagine" evidence="1">
    <location>
        <position position="512"/>
    </location>
</feature>
<feature type="glycosylation site" description="N-linked (GlcNAc...) asparagine" evidence="1">
    <location>
        <position position="531"/>
    </location>
</feature>
<feature type="glycosylation site" description="N-linked (GlcNAc...) asparagine" evidence="1">
    <location>
        <position position="573"/>
    </location>
</feature>
<feature type="glycosylation site" description="N-linked (GlcNAc...) asparagine" evidence="1">
    <location>
        <position position="587"/>
    </location>
</feature>
<accession>P53835</accession>
<accession>D6W0R5</accession>
<proteinExistence type="evidence at protein level"/>
<reference key="1">
    <citation type="journal article" date="1997" name="Nature">
        <title>The nucleotide sequence of Saccharomyces cerevisiae chromosome XIV and its evolutionary implications.</title>
        <authorList>
            <person name="Philippsen P."/>
            <person name="Kleine K."/>
            <person name="Poehlmann R."/>
            <person name="Duesterhoeft A."/>
            <person name="Hamberg K."/>
            <person name="Hegemann J.H."/>
            <person name="Obermaier B."/>
            <person name="Urrestarazu L.A."/>
            <person name="Aert R."/>
            <person name="Albermann K."/>
            <person name="Altmann R."/>
            <person name="Andre B."/>
            <person name="Baladron V."/>
            <person name="Ballesta J.P.G."/>
            <person name="Becam A.-M."/>
            <person name="Beinhauer J.D."/>
            <person name="Boskovic J."/>
            <person name="Buitrago M.J."/>
            <person name="Bussereau F."/>
            <person name="Coster F."/>
            <person name="Crouzet M."/>
            <person name="D'Angelo M."/>
            <person name="Dal Pero F."/>
            <person name="De Antoni A."/>
            <person name="del Rey F."/>
            <person name="Doignon F."/>
            <person name="Domdey H."/>
            <person name="Dubois E."/>
            <person name="Fiedler T.A."/>
            <person name="Fleig U."/>
            <person name="Floeth M."/>
            <person name="Fritz C."/>
            <person name="Gaillardin C."/>
            <person name="Garcia-Cantalejo J.M."/>
            <person name="Glansdorff N."/>
            <person name="Goffeau A."/>
            <person name="Gueldener U."/>
            <person name="Herbert C.J."/>
            <person name="Heumann K."/>
            <person name="Heuss-Neitzel D."/>
            <person name="Hilbert H."/>
            <person name="Hinni K."/>
            <person name="Iraqui Houssaini I."/>
            <person name="Jacquet M."/>
            <person name="Jimenez A."/>
            <person name="Jonniaux J.-L."/>
            <person name="Karpfinger-Hartl L."/>
            <person name="Lanfranchi G."/>
            <person name="Lepingle A."/>
            <person name="Levesque H."/>
            <person name="Lyck R."/>
            <person name="Maftahi M."/>
            <person name="Mallet L."/>
            <person name="Maurer C.T.C."/>
            <person name="Messenguy F."/>
            <person name="Mewes H.-W."/>
            <person name="Moestl D."/>
            <person name="Nasr F."/>
            <person name="Nicaud J.-M."/>
            <person name="Niedenthal R.K."/>
            <person name="Pandolfo D."/>
            <person name="Pierard A."/>
            <person name="Piravandi E."/>
            <person name="Planta R.J."/>
            <person name="Pohl T.M."/>
            <person name="Purnelle B."/>
            <person name="Rebischung C."/>
            <person name="Remacha M.A."/>
            <person name="Revuelta J.L."/>
            <person name="Rinke M."/>
            <person name="Saiz J.E."/>
            <person name="Sartorello F."/>
            <person name="Scherens B."/>
            <person name="Sen-Gupta M."/>
            <person name="Soler-Mira A."/>
            <person name="Urbanus J.H.M."/>
            <person name="Valle G."/>
            <person name="Van Dyck L."/>
            <person name="Verhasselt P."/>
            <person name="Vierendeels F."/>
            <person name="Vissers S."/>
            <person name="Voet M."/>
            <person name="Volckaert G."/>
            <person name="Wach A."/>
            <person name="Wambutt R."/>
            <person name="Wedler H."/>
            <person name="Zollner A."/>
            <person name="Hani J."/>
        </authorList>
    </citation>
    <scope>NUCLEOTIDE SEQUENCE [LARGE SCALE GENOMIC DNA]</scope>
    <source>
        <strain>ATCC 204508 / S288c</strain>
    </source>
</reference>
<reference key="2">
    <citation type="journal article" date="2014" name="G3 (Bethesda)">
        <title>The reference genome sequence of Saccharomyces cerevisiae: Then and now.</title>
        <authorList>
            <person name="Engel S.R."/>
            <person name="Dietrich F.S."/>
            <person name="Fisk D.G."/>
            <person name="Binkley G."/>
            <person name="Balakrishnan R."/>
            <person name="Costanzo M.C."/>
            <person name="Dwight S.S."/>
            <person name="Hitz B.C."/>
            <person name="Karra K."/>
            <person name="Nash R.S."/>
            <person name="Weng S."/>
            <person name="Wong E.D."/>
            <person name="Lloyd P."/>
            <person name="Skrzypek M.S."/>
            <person name="Miyasato S.R."/>
            <person name="Simison M."/>
            <person name="Cherry J.M."/>
        </authorList>
    </citation>
    <scope>GENOME REANNOTATION</scope>
    <source>
        <strain>ATCC 204508 / S288c</strain>
    </source>
</reference>
<reference key="3">
    <citation type="journal article" date="2000" name="J. Cell Biol.">
        <title>Prm1p, a pheromone-regulated multispanning membrane protein, facilitates plasma membrane fusion during yeast mating.</title>
        <authorList>
            <person name="Heiman M.G."/>
            <person name="Walter P."/>
        </authorList>
    </citation>
    <scope>FUNCTION</scope>
    <scope>SUBCELLULAR LOCATION</scope>
    <scope>TOPOLOGY</scope>
    <scope>INDUCTION</scope>
</reference>
<reference key="4">
    <citation type="journal article" date="2001" name="Mol. Biol. Cell">
        <title>Genome-wide responses to mitochondrial dysfunction.</title>
        <authorList>
            <person name="Epstein C.B."/>
            <person name="Waddle J.A."/>
            <person name="Hale W. IV"/>
            <person name="Dave V."/>
            <person name="Thornton J."/>
            <person name="Macatee T.L."/>
            <person name="Garner H.R."/>
            <person name="Butow R.A."/>
        </authorList>
    </citation>
    <scope>INDUCTION</scope>
</reference>
<reference key="5">
    <citation type="journal article" date="2002" name="Proc. Natl. Acad. Sci. U.S.A.">
        <title>Cell surface polarization during yeast mating.</title>
        <authorList>
            <person name="Bagnat M."/>
            <person name="Simons K."/>
        </authorList>
    </citation>
    <scope>SUBCELLULAR LOCATION</scope>
</reference>
<reference key="6">
    <citation type="journal article" date="2003" name="Cell">
        <title>Program-specific distribution of a transcription factor dependent on partner transcription factor and MAPK signaling.</title>
        <authorList>
            <person name="Zeitlinger J."/>
            <person name="Simon I."/>
            <person name="Harbison C.T."/>
            <person name="Hannett N.M."/>
            <person name="Volkert T.L."/>
            <person name="Fink G.R."/>
            <person name="Young R.A."/>
        </authorList>
    </citation>
    <scope>INDUCTION</scope>
</reference>
<reference key="7">
    <citation type="journal article" date="2004" name="Eukaryot. Cell">
        <title>Prm1 prevents contact-dependent lysis of yeast mating pairs.</title>
        <authorList>
            <person name="Jin H."/>
            <person name="Carlile C."/>
            <person name="Nolan S."/>
            <person name="Grote E."/>
        </authorList>
    </citation>
    <scope>FUNCTION</scope>
</reference>
<reference key="8">
    <citation type="journal article" date="2007" name="J. Cell Biol.">
        <title>The Golgi-resident protease Kex2 acts in conjunction with Prm1 to facilitate cell fusion during yeast mating.</title>
        <authorList>
            <person name="Heiman M.G."/>
            <person name="Engel A."/>
            <person name="Walter P."/>
        </authorList>
    </citation>
    <scope>FUNCTION</scope>
</reference>
<reference key="9">
    <citation type="journal article" date="2007" name="Mol. Biol. Cell">
        <title>The plasma membrane proteins Prm1 and Fig1 ascertain fidelity of membrane fusion during yeast mating.</title>
        <authorList>
            <person name="Aguilar P.S."/>
            <person name="Engel A."/>
            <person name="Walter P."/>
        </authorList>
    </citation>
    <scope>FUNCTION</scope>
</reference>
<reference key="10">
    <citation type="journal article" date="2008" name="J. Cell Biol.">
        <title>Ergosterol promotes pheromone signaling and plasma membrane fusion in mating yeast.</title>
        <authorList>
            <person name="Jin H."/>
            <person name="McCaffery J.M."/>
            <person name="Grote E."/>
        </authorList>
    </citation>
    <scope>FUNCTION</scope>
</reference>
<keyword id="KW-1003">Cell membrane</keyword>
<keyword id="KW-0184">Conjugation</keyword>
<keyword id="KW-0325">Glycoprotein</keyword>
<keyword id="KW-0472">Membrane</keyword>
<keyword id="KW-1185">Reference proteome</keyword>
<keyword id="KW-0812">Transmembrane</keyword>
<keyword id="KW-1133">Transmembrane helix</keyword>
<dbReference type="EMBL" id="Z71555">
    <property type="protein sequence ID" value="CAA96191.1"/>
    <property type="molecule type" value="Genomic_DNA"/>
</dbReference>
<dbReference type="EMBL" id="BK006947">
    <property type="protein sequence ID" value="DAA10281.1"/>
    <property type="molecule type" value="Genomic_DNA"/>
</dbReference>
<dbReference type="PIR" id="S63253">
    <property type="entry name" value="S63253"/>
</dbReference>
<dbReference type="RefSeq" id="NP_014120.1">
    <property type="nucleotide sequence ID" value="NM_001183117.1"/>
</dbReference>
<dbReference type="SMR" id="P53835"/>
<dbReference type="BioGRID" id="35562">
    <property type="interactions" value="27"/>
</dbReference>
<dbReference type="DIP" id="DIP-1385N"/>
<dbReference type="FunCoup" id="P53835">
    <property type="interactions" value="88"/>
</dbReference>
<dbReference type="IntAct" id="P53835">
    <property type="interactions" value="4"/>
</dbReference>
<dbReference type="MINT" id="P53835"/>
<dbReference type="STRING" id="4932.YNL279W"/>
<dbReference type="TCDB" id="9.B.63.1.1">
    <property type="family name" value="the yeast pheromone-induced plasma membrane mating cell fusion protein (prm1) family"/>
</dbReference>
<dbReference type="GlyCosmos" id="P53835">
    <property type="glycosylation" value="14 sites, No reported glycans"/>
</dbReference>
<dbReference type="GlyGen" id="P53835">
    <property type="glycosylation" value="14 sites"/>
</dbReference>
<dbReference type="PaxDb" id="4932-YNL279W"/>
<dbReference type="PeptideAtlas" id="P53835"/>
<dbReference type="EnsemblFungi" id="YNL279W_mRNA">
    <property type="protein sequence ID" value="YNL279W"/>
    <property type="gene ID" value="YNL279W"/>
</dbReference>
<dbReference type="GeneID" id="855442"/>
<dbReference type="KEGG" id="sce:YNL279W"/>
<dbReference type="AGR" id="SGD:S000005223"/>
<dbReference type="SGD" id="S000005223">
    <property type="gene designation" value="PRM1"/>
</dbReference>
<dbReference type="VEuPathDB" id="FungiDB:YNL279W"/>
<dbReference type="eggNOG" id="ENOG502QRP5">
    <property type="taxonomic scope" value="Eukaryota"/>
</dbReference>
<dbReference type="HOGENOM" id="CLU_010191_1_0_1"/>
<dbReference type="InParanoid" id="P53835"/>
<dbReference type="OMA" id="NVFGWVN"/>
<dbReference type="OrthoDB" id="5356111at2759"/>
<dbReference type="BioCyc" id="YEAST:G3O-33271-MONOMER"/>
<dbReference type="BioGRID-ORCS" id="855442">
    <property type="hits" value="0 hits in 10 CRISPR screens"/>
</dbReference>
<dbReference type="PRO" id="PR:P53835"/>
<dbReference type="Proteomes" id="UP000002311">
    <property type="component" value="Chromosome XIV"/>
</dbReference>
<dbReference type="RNAct" id="P53835">
    <property type="molecule type" value="protein"/>
</dbReference>
<dbReference type="GO" id="GO:0000324">
    <property type="term" value="C:fungal-type vacuole"/>
    <property type="evidence" value="ECO:0007005"/>
    <property type="project" value="SGD"/>
</dbReference>
<dbReference type="GO" id="GO:0043332">
    <property type="term" value="C:mating projection tip"/>
    <property type="evidence" value="ECO:0000314"/>
    <property type="project" value="SGD"/>
</dbReference>
<dbReference type="GO" id="GO:0005886">
    <property type="term" value="C:plasma membrane"/>
    <property type="evidence" value="ECO:0007669"/>
    <property type="project" value="UniProtKB-SubCell"/>
</dbReference>
<dbReference type="GO" id="GO:0032220">
    <property type="term" value="P:plasma membrane fusion involved in cytogamy"/>
    <property type="evidence" value="ECO:0000315"/>
    <property type="project" value="SGD"/>
</dbReference>
<dbReference type="InterPro" id="IPR026777">
    <property type="entry name" value="PRM1"/>
</dbReference>
<dbReference type="PANTHER" id="PTHR31030">
    <property type="entry name" value="PLASMA MEMBRANE FUSION PROTEIN PRM1"/>
    <property type="match status" value="1"/>
</dbReference>
<dbReference type="PANTHER" id="PTHR31030:SF1">
    <property type="entry name" value="PLASMA MEMBRANE FUSION PROTEIN PRM1"/>
    <property type="match status" value="1"/>
</dbReference>
<gene>
    <name type="primary">PRM1</name>
    <name type="ordered locus">YNL279W</name>
    <name type="ORF">N0605</name>
</gene>
<comment type="function">
    <text evidence="2 6 7 8 9">Involved in cell fusion during mating by stabilizing the plasma membrane fusion event.</text>
</comment>
<comment type="subcellular location">
    <subcellularLocation>
        <location evidence="2 4">Cell membrane</location>
        <topology evidence="2 4">Multi-pass membrane protein</topology>
    </subcellularLocation>
    <text>Localizes at sites of cell fusion during mating.</text>
</comment>
<comment type="induction">
    <text evidence="2 3 5">By pheromones during mating, through the regulation by the STE12 transcription factor. Also induced in respiratory-deficient cells.</text>
</comment>
<comment type="similarity">
    <text evidence="10">Belongs to the PRM1 family.</text>
</comment>
<evidence type="ECO:0000255" key="1"/>
<evidence type="ECO:0000269" key="2">
    <source>
    </source>
</evidence>
<evidence type="ECO:0000269" key="3">
    <source>
    </source>
</evidence>
<evidence type="ECO:0000269" key="4">
    <source>
    </source>
</evidence>
<evidence type="ECO:0000269" key="5">
    <source>
    </source>
</evidence>
<evidence type="ECO:0000269" key="6">
    <source>
    </source>
</evidence>
<evidence type="ECO:0000269" key="7">
    <source>
    </source>
</evidence>
<evidence type="ECO:0000269" key="8">
    <source>
    </source>
</evidence>
<evidence type="ECO:0000269" key="9">
    <source>
    </source>
</evidence>
<evidence type="ECO:0000305" key="10"/>
<sequence length="661" mass="73353">MSGFKCYLQLGDRLSQIWLNKYTLVLLLAMLKLLFFSKSIQHAIEVSETYILSNCYSIDSLYSKMTDNTPHYLGIMGNYLIEKGMEETVKATLETLSLIVYASEGLVNFAIDLYLGTYACLIVSAVDGTVDVATNITEKLISLVNDTVSSVANELDTGLNDISKIINKVIKAASKVENFFTGDDDDSNMTSSIKSVNLTISALHNLYIPSSINDKLEELSAKTPDFAQVKNTTKNLISVPFNEVRKNIKAVNASNIIGDTSVLYVPPVSLDNSTGICSSNQSEILAFYSILGHVLKIATVVCITVLICFAVGAMAPVAWNEIKLWRRLCGMRDHYMLSRQDSYTSFSSENTHELKDPFRDPPIQNGQYDVIASYQQCFQTWNTRIAGWMTNLVTFGKSPENIDPKTKQKIEWVVAYMTSERALCVLGIGLLGILVCICQFVMIALLKHKISHSLTSNDGDGVQNLLKSSTAVDIENQMSLWSVQTNKYINTTETNINQEVFGWINTTTLSVNNTVATMISDIDTTLADVFNGTLLYNPMKTVVGCAIENKLYTIEKAMTWIHDKAQLHIPRINGTQIKQALAKQTDNSTIPTASSTSAATENLLENLVNDMREGLLKILRAYHRITLGELTVALVILAVWLVQLPIALVILRLRLRKATFD</sequence>